<accession>P31387</accession>
<accession>Q1RME2</accession>
<reference key="1">
    <citation type="journal article" date="1993" name="Mol. Pharmacol.">
        <title>Mouse 5-hydroxytryptamine5A and 5-hydroxytryptamine5B receptors define a new family of serotonin receptors: cloning, functional expression, and chromosomal localization.</title>
        <authorList>
            <person name="Matthes H."/>
            <person name="Boschert U."/>
            <person name="Amlaiky N."/>
            <person name="Grailhe R."/>
            <person name="Plassat J.-L."/>
            <person name="Muscatelli F."/>
            <person name="Mattei M.-G."/>
            <person name="Hen R."/>
        </authorList>
    </citation>
    <scope>NUCLEOTIDE SEQUENCE [MRNA]</scope>
    <scope>FUNCTION</scope>
    <scope>TISSUE SPECIFICITY</scope>
    <source>
        <tissue>Brain</tissue>
    </source>
</reference>
<reference key="2">
    <citation type="journal article" date="2004" name="Genome Res.">
        <title>The status, quality, and expansion of the NIH full-length cDNA project: the Mammalian Gene Collection (MGC).</title>
        <authorList>
            <consortium name="The MGC Project Team"/>
        </authorList>
    </citation>
    <scope>NUCLEOTIDE SEQUENCE [LARGE SCALE MRNA]</scope>
</reference>
<proteinExistence type="evidence at transcript level"/>
<keyword id="KW-1003">Cell membrane</keyword>
<keyword id="KW-1015">Disulfide bond</keyword>
<keyword id="KW-0297">G-protein coupled receptor</keyword>
<keyword id="KW-0325">Glycoprotein</keyword>
<keyword id="KW-0472">Membrane</keyword>
<keyword id="KW-0675">Receptor</keyword>
<keyword id="KW-1185">Reference proteome</keyword>
<keyword id="KW-0807">Transducer</keyword>
<keyword id="KW-0812">Transmembrane</keyword>
<keyword id="KW-1133">Transmembrane helix</keyword>
<name>5HT5B_MOUSE</name>
<protein>
    <recommendedName>
        <fullName evidence="7">5-hydroxytryptamine receptor 5B</fullName>
        <shortName evidence="6">5-HT-5B</shortName>
        <shortName evidence="6">5-HT5B</shortName>
    </recommendedName>
    <alternativeName>
        <fullName evidence="6">Serotonin receptor 5B</fullName>
    </alternativeName>
</protein>
<feature type="chain" id="PRO_0000068972" description="5-hydroxytryptamine receptor 5B">
    <location>
        <begin position="1"/>
        <end position="370"/>
    </location>
</feature>
<feature type="topological domain" description="Extracellular" evidence="1">
    <location>
        <begin position="1"/>
        <end position="48"/>
    </location>
</feature>
<feature type="transmembrane region" description="Helical; Name=1" evidence="1">
    <location>
        <begin position="49"/>
        <end position="75"/>
    </location>
</feature>
<feature type="topological domain" description="Cytoplasmic" evidence="1">
    <location>
        <begin position="76"/>
        <end position="88"/>
    </location>
</feature>
<feature type="transmembrane region" description="Helical; Name=2" evidence="1">
    <location>
        <begin position="89"/>
        <end position="115"/>
    </location>
</feature>
<feature type="topological domain" description="Extracellular" evidence="1">
    <location>
        <begin position="116"/>
        <end position="127"/>
    </location>
</feature>
<feature type="transmembrane region" description="Helical; Name=3" evidence="1">
    <location>
        <begin position="128"/>
        <end position="150"/>
    </location>
</feature>
<feature type="topological domain" description="Cytoplasmic" evidence="1">
    <location>
        <begin position="151"/>
        <end position="168"/>
    </location>
</feature>
<feature type="transmembrane region" description="Helical; Name=4" evidence="1">
    <location>
        <begin position="169"/>
        <end position="189"/>
    </location>
</feature>
<feature type="topological domain" description="Extracellular" evidence="1">
    <location>
        <begin position="190"/>
        <end position="211"/>
    </location>
</feature>
<feature type="transmembrane region" description="Helical; Name=5" evidence="1">
    <location>
        <begin position="212"/>
        <end position="233"/>
    </location>
</feature>
<feature type="topological domain" description="Cytoplasmic" evidence="1">
    <location>
        <begin position="234"/>
        <end position="300"/>
    </location>
</feature>
<feature type="transmembrane region" description="Helical; Name=6" evidence="1">
    <location>
        <begin position="301"/>
        <end position="325"/>
    </location>
</feature>
<feature type="topological domain" description="Extracellular" evidence="1">
    <location>
        <begin position="326"/>
        <end position="327"/>
    </location>
</feature>
<feature type="transmembrane region" description="Helical; Name=7" evidence="1">
    <location>
        <begin position="328"/>
        <end position="352"/>
    </location>
</feature>
<feature type="topological domain" description="Cytoplasmic" evidence="1">
    <location>
        <begin position="353"/>
        <end position="370"/>
    </location>
</feature>
<feature type="region of interest" description="Disordered" evidence="4">
    <location>
        <begin position="1"/>
        <end position="36"/>
    </location>
</feature>
<feature type="compositionally biased region" description="Low complexity" evidence="4">
    <location>
        <begin position="20"/>
        <end position="36"/>
    </location>
</feature>
<feature type="binding site" evidence="1">
    <location>
        <position position="134"/>
    </location>
    <ligand>
        <name>serotonin</name>
        <dbReference type="ChEBI" id="CHEBI:350546"/>
    </ligand>
</feature>
<feature type="glycosylation site" description="N-linked (GlcNAc...) asparagine" evidence="2">
    <location>
        <position position="5"/>
    </location>
</feature>
<feature type="disulfide bond" evidence="3">
    <location>
        <begin position="127"/>
        <end position="205"/>
    </location>
</feature>
<comment type="function">
    <text evidence="1 5">G-protein coupled receptor for 5-hydroxytryptamine (serotonin), a biogenic hormone that functions as a neurotransmitter, a hormone and a mitogen (PubMed:8450829). Also functions as a receptor for ergot alkaloid derivatives and other psychoactive substances (By similarity). Ligand binding causes a conformation change that triggers signaling via guanine nucleotide-binding proteins (G proteins) and modulates the activity of downstream effectors (By similarity). Htr5b is coupled to G(i)/G(o) G alpha proteins and mediates inhibitory neurotransmission: signaling inhibits adenylate cyclase activity and activates a phosphatidylinositol-calcium second messenger system that regulates the release of Ca(2+) ions from intracellular stores (By similarity).</text>
</comment>
<comment type="subcellular location">
    <subcellularLocation>
        <location evidence="1">Cell membrane</location>
        <topology evidence="2">Multi-pass membrane protein</topology>
    </subcellularLocation>
</comment>
<comment type="tissue specificity">
    <text evidence="5">Expressed predominantly in the central nervous system; in the hippocampus, habenula, and the doral raphe.</text>
</comment>
<comment type="similarity">
    <text evidence="3">Belongs to the G-protein coupled receptor 1 family.</text>
</comment>
<organism>
    <name type="scientific">Mus musculus</name>
    <name type="common">Mouse</name>
    <dbReference type="NCBI Taxonomy" id="10090"/>
    <lineage>
        <taxon>Eukaryota</taxon>
        <taxon>Metazoa</taxon>
        <taxon>Chordata</taxon>
        <taxon>Craniata</taxon>
        <taxon>Vertebrata</taxon>
        <taxon>Euteleostomi</taxon>
        <taxon>Mammalia</taxon>
        <taxon>Eutheria</taxon>
        <taxon>Euarchontoglires</taxon>
        <taxon>Glires</taxon>
        <taxon>Rodentia</taxon>
        <taxon>Myomorpha</taxon>
        <taxon>Muroidea</taxon>
        <taxon>Muridae</taxon>
        <taxon>Murinae</taxon>
        <taxon>Mus</taxon>
        <taxon>Mus</taxon>
    </lineage>
</organism>
<evidence type="ECO:0000250" key="1">
    <source>
        <dbReference type="UniProtKB" id="P47898"/>
    </source>
</evidence>
<evidence type="ECO:0000255" key="2"/>
<evidence type="ECO:0000255" key="3">
    <source>
        <dbReference type="PROSITE-ProRule" id="PRU00521"/>
    </source>
</evidence>
<evidence type="ECO:0000256" key="4">
    <source>
        <dbReference type="SAM" id="MobiDB-lite"/>
    </source>
</evidence>
<evidence type="ECO:0000269" key="5">
    <source>
    </source>
</evidence>
<evidence type="ECO:0000303" key="6">
    <source>
    </source>
</evidence>
<evidence type="ECO:0000305" key="7"/>
<evidence type="ECO:0000312" key="8">
    <source>
        <dbReference type="MGI" id="MGI:96284"/>
    </source>
</evidence>
<dbReference type="EMBL" id="X69867">
    <property type="protein sequence ID" value="CAA49501.1"/>
    <property type="molecule type" value="mRNA"/>
</dbReference>
<dbReference type="EMBL" id="BC114988">
    <property type="protein sequence ID" value="AAI14989.1"/>
    <property type="molecule type" value="mRNA"/>
</dbReference>
<dbReference type="EMBL" id="BC115825">
    <property type="protein sequence ID" value="AAI15826.1"/>
    <property type="molecule type" value="mRNA"/>
</dbReference>
<dbReference type="CCDS" id="CCDS15239.1"/>
<dbReference type="PIR" id="I48231">
    <property type="entry name" value="I48231"/>
</dbReference>
<dbReference type="SMR" id="P31387"/>
<dbReference type="FunCoup" id="P31387">
    <property type="interactions" value="65"/>
</dbReference>
<dbReference type="STRING" id="10090.ENSMUSP00000057212"/>
<dbReference type="BindingDB" id="P31387"/>
<dbReference type="GuidetoPHARMACOLOGY" id="648"/>
<dbReference type="GlyCosmos" id="P31387">
    <property type="glycosylation" value="1 site, No reported glycans"/>
</dbReference>
<dbReference type="GlyGen" id="P31387">
    <property type="glycosylation" value="3 sites"/>
</dbReference>
<dbReference type="iPTMnet" id="P31387"/>
<dbReference type="PhosphoSitePlus" id="P31387"/>
<dbReference type="PaxDb" id="10090-ENSMUSP00000057212"/>
<dbReference type="AGR" id="MGI:96284"/>
<dbReference type="MGI" id="MGI:96284">
    <property type="gene designation" value="Htr5b"/>
</dbReference>
<dbReference type="eggNOG" id="KOG3656">
    <property type="taxonomic scope" value="Eukaryota"/>
</dbReference>
<dbReference type="InParanoid" id="P31387"/>
<dbReference type="OrthoDB" id="5957871at2759"/>
<dbReference type="PhylomeDB" id="P31387"/>
<dbReference type="PRO" id="PR:P31387"/>
<dbReference type="Proteomes" id="UP000000589">
    <property type="component" value="Unplaced"/>
</dbReference>
<dbReference type="RNAct" id="P31387">
    <property type="molecule type" value="protein"/>
</dbReference>
<dbReference type="GO" id="GO:0005886">
    <property type="term" value="C:plasma membrane"/>
    <property type="evidence" value="ECO:0000250"/>
    <property type="project" value="UniProtKB"/>
</dbReference>
<dbReference type="GO" id="GO:0004993">
    <property type="term" value="F:G protein-coupled serotonin receptor activity"/>
    <property type="evidence" value="ECO:0000314"/>
    <property type="project" value="MGI"/>
</dbReference>
<dbReference type="GO" id="GO:0001586">
    <property type="term" value="F:Gi/o-coupled serotonin receptor activity"/>
    <property type="evidence" value="ECO:0000250"/>
    <property type="project" value="UniProtKB"/>
</dbReference>
<dbReference type="GO" id="GO:0007198">
    <property type="term" value="P:adenylate cyclase-inhibiting serotonin receptor signaling pathway"/>
    <property type="evidence" value="ECO:0000250"/>
    <property type="project" value="UniProtKB"/>
</dbReference>
<dbReference type="FunFam" id="1.20.1070.10:FF:000089">
    <property type="entry name" value="5-hydroxytryptamine receptor 5A"/>
    <property type="match status" value="1"/>
</dbReference>
<dbReference type="Gene3D" id="1.20.1070.10">
    <property type="entry name" value="Rhodopsin 7-helix transmembrane proteins"/>
    <property type="match status" value="1"/>
</dbReference>
<dbReference type="InterPro" id="IPR000431">
    <property type="entry name" value="5HT5B_rcpt"/>
</dbReference>
<dbReference type="InterPro" id="IPR002231">
    <property type="entry name" value="5HT_rcpt"/>
</dbReference>
<dbReference type="InterPro" id="IPR000276">
    <property type="entry name" value="GPCR_Rhodpsn"/>
</dbReference>
<dbReference type="InterPro" id="IPR017452">
    <property type="entry name" value="GPCR_Rhodpsn_7TM"/>
</dbReference>
<dbReference type="PANTHER" id="PTHR24248:SF202">
    <property type="entry name" value="5-HYDROXYTRYPTAMINE RECEPTOR 5A"/>
    <property type="match status" value="1"/>
</dbReference>
<dbReference type="PANTHER" id="PTHR24248">
    <property type="entry name" value="ADRENERGIC RECEPTOR-RELATED G-PROTEIN COUPLED RECEPTOR"/>
    <property type="match status" value="1"/>
</dbReference>
<dbReference type="Pfam" id="PF00001">
    <property type="entry name" value="7tm_1"/>
    <property type="match status" value="1"/>
</dbReference>
<dbReference type="PRINTS" id="PR00519">
    <property type="entry name" value="5HT5BRECEPTR"/>
</dbReference>
<dbReference type="PRINTS" id="PR01101">
    <property type="entry name" value="5HTRECEPTOR"/>
</dbReference>
<dbReference type="PRINTS" id="PR00237">
    <property type="entry name" value="GPCRRHODOPSN"/>
</dbReference>
<dbReference type="SMART" id="SM01381">
    <property type="entry name" value="7TM_GPCR_Srsx"/>
    <property type="match status" value="1"/>
</dbReference>
<dbReference type="SUPFAM" id="SSF81321">
    <property type="entry name" value="Family A G protein-coupled receptor-like"/>
    <property type="match status" value="1"/>
</dbReference>
<dbReference type="PROSITE" id="PS00237">
    <property type="entry name" value="G_PROTEIN_RECEP_F1_1"/>
    <property type="match status" value="1"/>
</dbReference>
<dbReference type="PROSITE" id="PS50262">
    <property type="entry name" value="G_PROTEIN_RECEP_F1_2"/>
    <property type="match status" value="1"/>
</dbReference>
<gene>
    <name evidence="8" type="primary">Htr5b</name>
    <name evidence="6" type="synonym">5ht5b</name>
</gene>
<sequence length="370" mass="41201">MEVSNLSGATPGLAFPPGPESCSDSPSSGRSMGSTPGGLILPGREPPFSAFTVLVVTLLVLLIAATFLWNLLVLVTILRVRAFHRVPHNLVASTAVSDVLVAVLVMPLSLVSELSAGRRWQLGRSLCHVWISFDVLCCTASIWNVAAIALDRYWTITRHLQYTLRTRSRASALMIAITWALSALIALAPLLFGWGEAYDARLQRCQVSQEPSYAVFSTCGAFYLPLAVVLFVYWKIYKAAKFRFGRRRRAVVPLPATTQAKEAPPESEMVFTARRRATVTFQTSGDSWREQKEKRAAMMVGILIGVFVLCWIPFFLTELISPLCACSLPPIWKSIFLWLGYSNSFFNPLIYTAFNKNYNNAFKSLFTKQR</sequence>